<organism>
    <name type="scientific">Xenopus tropicalis</name>
    <name type="common">Western clawed frog</name>
    <name type="synonym">Silurana tropicalis</name>
    <dbReference type="NCBI Taxonomy" id="8364"/>
    <lineage>
        <taxon>Eukaryota</taxon>
        <taxon>Metazoa</taxon>
        <taxon>Chordata</taxon>
        <taxon>Craniata</taxon>
        <taxon>Vertebrata</taxon>
        <taxon>Euteleostomi</taxon>
        <taxon>Amphibia</taxon>
        <taxon>Batrachia</taxon>
        <taxon>Anura</taxon>
        <taxon>Pipoidea</taxon>
        <taxon>Pipidae</taxon>
        <taxon>Xenopodinae</taxon>
        <taxon>Xenopus</taxon>
        <taxon>Silurana</taxon>
    </lineage>
</organism>
<reference key="1">
    <citation type="submission" date="2005-06" db="EMBL/GenBank/DDBJ databases">
        <title>Sequence of Xenopus tropicalis development genes.</title>
        <authorList>
            <person name="Qin S."/>
            <person name="Dors M."/>
            <person name="Johnson E."/>
            <person name="Bloom S."/>
            <person name="Hood L."/>
            <person name="Rowen L."/>
        </authorList>
    </citation>
    <scope>NUCLEOTIDE SEQUENCE [GENOMIC DNA]</scope>
</reference>
<reference key="2">
    <citation type="submission" date="2006-03" db="EMBL/GenBank/DDBJ databases">
        <authorList>
            <consortium name="Sanger Xenopus tropicalis EST/cDNA project"/>
        </authorList>
    </citation>
    <scope>NUCLEOTIDE SEQUENCE [LARGE SCALE MRNA]</scope>
    <source>
        <tissue>Egg</tissue>
    </source>
</reference>
<reference key="3">
    <citation type="submission" date="2004-08" db="EMBL/GenBank/DDBJ databases">
        <authorList>
            <consortium name="NIH - Xenopus Gene Collection (XGC) project"/>
        </authorList>
    </citation>
    <scope>NUCLEOTIDE SEQUENCE [LARGE SCALE MRNA]</scope>
    <source>
        <tissue>Embryo</tissue>
    </source>
</reference>
<sequence>MKPIPATPDHLGQHQESPRRKDKGEAESERQRTRERLEATLAGLAELGYLRHRQELLVKSALTPGAPTHGDTATRAGDTPRSLEEKFLEDNILLLKKQLNCLRKRDAGLLSQLHELDKQINDLKIDVEKTEEHLETDSRPSSGFYELSDGTSGSLSNSSNSVFSECLSSCHSSTCFCNPLETSLNLTDGQAKSADDFLEWLDYRDSQHETGTVRRSFSAPHSNSVDVAADVHPKYQCDLVSKNGNDIYRYPSPLHAVAVQSPMFLLSVMGNIKAEEPEEEIGPNDNDDCIVPELDHLKDEDSFLHQSSLCSLPLSSGKKMDGYILSIIQKKAHPVRTNKPRTSVNADPGKGILRHGSICVKQTGGVSQSSTVNLKNSKQTCLHSTGMISVDNSTYPSLKQCSKESLSEQLESKRMPSISTYPSCNVNELQSQNNSRNTVKSVCQGLARGSVAMTSNVQKENVTPNAPTNLSNASSSACNGSPRESTQMSALLPQEIKVVPPVKKISPKNTLLSYHASSSFDERPPLDFKSEGSSSQSLDEGLLVNAHYIPAQQQGVKLHKNIKNVKIVKSSTLKHRANVQYVAENGSQTLKEKSKAVGKKCRFPEDLDTNKKVKKSTPRTKKTSHPNFEPAVVGRNPVAVRSGIKSHGQPKDVVLAKPKHKRGDYRRWKSSAEISYEEALRRARRRAQREMMGVYAQVPFPYASPYAYIASDSEYSAECESLFHSTVVDTSEDEQSNYTTNCFGDSESSLSEVEFVGESTTSSDTDESGGLIWSQFVHTLPMQATATAELQTTAKAFVKIKASHNLKKKILRFRSGSLKLMTTV</sequence>
<protein>
    <recommendedName>
        <fullName>Dapper 1</fullName>
    </recommendedName>
</protein>
<feature type="chain" id="PRO_0000191357" description="Dapper 1">
    <location>
        <begin position="1"/>
        <end position="824"/>
    </location>
</feature>
<feature type="region of interest" description="Disordered" evidence="3">
    <location>
        <begin position="1"/>
        <end position="34"/>
    </location>
</feature>
<feature type="region of interest" description="Interaction with tcf7l1" evidence="1">
    <location>
        <begin position="2"/>
        <end position="343"/>
    </location>
</feature>
<feature type="region of interest" description="Disordered" evidence="3">
    <location>
        <begin position="61"/>
        <end position="80"/>
    </location>
</feature>
<feature type="region of interest" description="Disordered" evidence="3">
    <location>
        <begin position="131"/>
        <end position="150"/>
    </location>
</feature>
<feature type="region of interest" description="Disordered" evidence="3">
    <location>
        <begin position="454"/>
        <end position="487"/>
    </location>
</feature>
<feature type="region of interest" description="Disordered" evidence="3">
    <location>
        <begin position="516"/>
        <end position="536"/>
    </location>
</feature>
<feature type="coiled-coil region" evidence="2">
    <location>
        <begin position="19"/>
        <end position="47"/>
    </location>
</feature>
<feature type="short sequence motif" description="PDZ-binding" evidence="1">
    <location>
        <begin position="821"/>
        <end position="824"/>
    </location>
</feature>
<feature type="compositionally biased region" description="Basic and acidic residues" evidence="3">
    <location>
        <begin position="11"/>
        <end position="34"/>
    </location>
</feature>
<feature type="compositionally biased region" description="Basic and acidic residues" evidence="3">
    <location>
        <begin position="520"/>
        <end position="530"/>
    </location>
</feature>
<proteinExistence type="evidence at transcript level"/>
<name>DACT1_XENTR</name>
<gene>
    <name type="primary">dact1</name>
    <name type="ORF">TEgg062l20.1</name>
</gene>
<keyword id="KW-0175">Coiled coil</keyword>
<keyword id="KW-0963">Cytoplasm</keyword>
<keyword id="KW-0217">Developmental protein</keyword>
<keyword id="KW-0539">Nucleus</keyword>
<keyword id="KW-1185">Reference proteome</keyword>
<keyword id="KW-0879">Wnt signaling pathway</keyword>
<evidence type="ECO:0000250" key="1"/>
<evidence type="ECO:0000255" key="2"/>
<evidence type="ECO:0000256" key="3">
    <source>
        <dbReference type="SAM" id="MobiDB-lite"/>
    </source>
</evidence>
<evidence type="ECO:0000305" key="4"/>
<comment type="function">
    <text evidence="1">Involved in regulation of intracellular signaling pathways during development. Specifically thought to play a role in canonical and/or non-canonical Wnt signaling pathways through interaction with DSH (Dishevelled) family proteins. Binds to dvl2 and regulates the degradation of ctnnb1/beta-catenin, thereby modulating the transcriptional activation of target genes of the Wnt signaling pathway. May also bind to and directly stimulate the activity of tcf7l1 (By similarity).</text>
</comment>
<comment type="subunit">
    <text evidence="1">Interacts with dbf4, dvl2 and tcf7l1.</text>
</comment>
<comment type="subcellular location">
    <subcellularLocation>
        <location evidence="1">Cytoplasm</location>
    </subcellularLocation>
    <subcellularLocation>
        <location evidence="1">Nucleus</location>
    </subcellularLocation>
</comment>
<comment type="domain">
    <text evidence="1">The C-terminal PDZ-binding motif may mediate interaction with the PDZ domains of DSH (Dishevelled) family proteins.</text>
</comment>
<comment type="similarity">
    <text evidence="4">Belongs to the dapper family.</text>
</comment>
<dbReference type="EMBL" id="AC160828">
    <property type="protein sequence ID" value="AAY90072.1"/>
    <property type="molecule type" value="Genomic_DNA"/>
</dbReference>
<dbReference type="EMBL" id="CR761983">
    <property type="protein sequence ID" value="CAJ81395.1"/>
    <property type="molecule type" value="mRNA"/>
</dbReference>
<dbReference type="EMBL" id="BC080457">
    <property type="protein sequence ID" value="AAH80457.1"/>
    <property type="molecule type" value="mRNA"/>
</dbReference>
<dbReference type="RefSeq" id="NP_001007950.1">
    <property type="nucleotide sequence ID" value="NM_001007949.2"/>
</dbReference>
<dbReference type="SMR" id="Q66KC9"/>
<dbReference type="FunCoup" id="Q66KC9">
    <property type="interactions" value="1594"/>
</dbReference>
<dbReference type="STRING" id="8364.ENSXETP00000044571"/>
<dbReference type="PaxDb" id="8364-ENSXETP00000026164"/>
<dbReference type="GeneID" id="493325"/>
<dbReference type="KEGG" id="xtr:493325"/>
<dbReference type="AGR" id="Xenbase:XB-GENE-478639"/>
<dbReference type="CTD" id="51339"/>
<dbReference type="Xenbase" id="XB-GENE-478639">
    <property type="gene designation" value="dact1"/>
</dbReference>
<dbReference type="eggNOG" id="ENOG502QVXB">
    <property type="taxonomic scope" value="Eukaryota"/>
</dbReference>
<dbReference type="HOGENOM" id="CLU_021211_1_0_1"/>
<dbReference type="InParanoid" id="Q66KC9"/>
<dbReference type="OMA" id="HKRGDYR"/>
<dbReference type="OrthoDB" id="9448112at2759"/>
<dbReference type="PhylomeDB" id="Q66KC9"/>
<dbReference type="TreeFam" id="TF331300"/>
<dbReference type="Reactome" id="R-XTR-4641258">
    <property type="pathway name" value="Degradation of DVL"/>
</dbReference>
<dbReference type="Proteomes" id="UP000008143">
    <property type="component" value="Chromosome 8"/>
</dbReference>
<dbReference type="GO" id="GO:0005737">
    <property type="term" value="C:cytoplasm"/>
    <property type="evidence" value="ECO:0007669"/>
    <property type="project" value="UniProtKB-SubCell"/>
</dbReference>
<dbReference type="GO" id="GO:0005634">
    <property type="term" value="C:nucleus"/>
    <property type="evidence" value="ECO:0007669"/>
    <property type="project" value="UniProtKB-SubCell"/>
</dbReference>
<dbReference type="GO" id="GO:0016055">
    <property type="term" value="P:Wnt signaling pathway"/>
    <property type="evidence" value="ECO:0007669"/>
    <property type="project" value="UniProtKB-KW"/>
</dbReference>
<dbReference type="InterPro" id="IPR024843">
    <property type="entry name" value="Dapper"/>
</dbReference>
<dbReference type="PANTHER" id="PTHR15919:SF12">
    <property type="entry name" value="DAPPER HOMOLOG 1"/>
    <property type="match status" value="1"/>
</dbReference>
<dbReference type="PANTHER" id="PTHR15919">
    <property type="entry name" value="DAPPER-RELATED"/>
    <property type="match status" value="1"/>
</dbReference>
<dbReference type="Pfam" id="PF15268">
    <property type="entry name" value="Dapper"/>
    <property type="match status" value="1"/>
</dbReference>
<accession>Q66KC9</accession>
<accession>Q28FG5</accession>